<protein>
    <recommendedName>
        <fullName>Unknown protein 5</fullName>
    </recommendedName>
</protein>
<name>UP05_GINBI</name>
<keyword id="KW-0903">Direct protein sequencing</keyword>
<sequence length="9" mass="1025">NNQLNASHK</sequence>
<reference key="1">
    <citation type="journal article" date="2009" name="Physiol. Plantarum">
        <title>The presence of sinapyl lignin in Ginkgo biloba cell cultures changes our views of the evolution of lignin biosynthesis.</title>
        <authorList>
            <person name="Novo Uzal E."/>
            <person name="Gomez Ros L.V."/>
            <person name="Pomar F."/>
            <person name="Bernal M.A."/>
            <person name="Paradela A."/>
            <person name="Albar J.P."/>
            <person name="Ros Barcelo A."/>
        </authorList>
    </citation>
    <scope>PROTEIN SEQUENCE</scope>
    <source>
        <strain>PC-650</strain>
        <tissue>Callus</tissue>
    </source>
</reference>
<proteinExistence type="evidence at protein level"/>
<accession>P85403</accession>
<organism>
    <name type="scientific">Ginkgo biloba</name>
    <name type="common">Ginkgo</name>
    <name type="synonym">Maidenhair tree</name>
    <dbReference type="NCBI Taxonomy" id="3311"/>
    <lineage>
        <taxon>Eukaryota</taxon>
        <taxon>Viridiplantae</taxon>
        <taxon>Streptophyta</taxon>
        <taxon>Embryophyta</taxon>
        <taxon>Tracheophyta</taxon>
        <taxon>Spermatophyta</taxon>
        <taxon>Ginkgoidae</taxon>
        <taxon>Ginkgoales</taxon>
        <taxon>Ginkgoaceae</taxon>
        <taxon>Ginkgo</taxon>
    </lineage>
</organism>
<feature type="chain" id="PRO_0000341518" description="Unknown protein 5">
    <location>
        <begin position="1" status="less than"/>
        <end position="9" status="greater than"/>
    </location>
</feature>
<feature type="unsure residue" description="Q or K">
    <location>
        <position position="3"/>
    </location>
</feature>
<feature type="unsure residue" description="L or I">
    <location>
        <position position="4"/>
    </location>
</feature>
<feature type="non-terminal residue">
    <location>
        <position position="1"/>
    </location>
</feature>
<feature type="non-terminal residue">
    <location>
        <position position="9"/>
    </location>
</feature>